<geneLocation type="plasmid" evidence="6">
    <name>pTML1</name>
</geneLocation>
<sequence length="654" mass="72545">MNESALNPNYLFHPFVKRFPGDPEHVRNISDIQQLEKYPISERFPCQTVTDALFIAAKKYQHARAMSYLPNGRADDVLQSWSYLEFLEQCIGAANLFHSLGIESDHSVAFLLPNMPEMVFGLWGAQAVAISTPINPFLAVNHICGIVTETKTTILVTLSPDTNPSLFEKALAVKHNTTHTMTLVTIGTPCEDAIDWHTELKKQPFNRYLFNRQLTGMETSAYFHTGGTTGTPKIARHTHRGAMINACQMLIVGPTETELDTKSKVSLCALPLFHVNAIVVSSLTSLLNGSELLLAGQQGFRNKALMSDFWRIVERFKVNFFAGVPTVYAALLEQPVEQHNIDSLFYCGCGSSPMPQVLIKEFTQRTGADICEGYGMTETTACASTHYYYGDRKVGSVGMRVPYQHIRAVHLDDNGQIIKECDCDEVGVLLIQGPNVIPEYKQAFANEQAWPEPGWLNTGDLGKFDADGYLWLTGRQKDLIIRGGHNIDPLIIENTLVSHSDVVMAAAVGKPDAYAGELPVAYVTLTSGATLSADELKQYCKDYISEPAASPVEIYITAELPMTPIGKIFKLPLKHDVIVRFVRELIQALDDTLDFSIDIIDDVSTGNIVSINFAATREKMEAVASQLQQELDKLHFQWKCTFTPVLAEQTVLES</sequence>
<organism>
    <name type="scientific">Pseudoalteromonas sp. (strain SANK 73390)</name>
    <dbReference type="NCBI Taxonomy" id="747457"/>
    <lineage>
        <taxon>Bacteria</taxon>
        <taxon>Pseudomonadati</taxon>
        <taxon>Pseudomonadota</taxon>
        <taxon>Gammaproteobacteria</taxon>
        <taxon>Alteromonadales</taxon>
        <taxon>Pseudoalteromonadaceae</taxon>
        <taxon>Pseudoalteromonas</taxon>
    </lineage>
</organism>
<name>TMLU_PSEX7</name>
<keyword id="KW-0045">Antibiotic biosynthesis</keyword>
<keyword id="KW-0067">ATP-binding</keyword>
<keyword id="KW-0436">Ligase</keyword>
<keyword id="KW-0547">Nucleotide-binding</keyword>
<keyword id="KW-0614">Plasmid</keyword>
<evidence type="ECO:0000269" key="1">
    <source>
    </source>
</evidence>
<evidence type="ECO:0000269" key="2">
    <source>
    </source>
</evidence>
<evidence type="ECO:0000303" key="3">
    <source>
    </source>
</evidence>
<evidence type="ECO:0000305" key="4"/>
<evidence type="ECO:0000305" key="5">
    <source>
    </source>
</evidence>
<evidence type="ECO:0000312" key="6">
    <source>
        <dbReference type="EMBL" id="CBK62739.1"/>
    </source>
</evidence>
<dbReference type="EC" id="6.2.1.60" evidence="2"/>
<dbReference type="EMBL" id="FN689524">
    <property type="protein sequence ID" value="CBK62739.1"/>
    <property type="molecule type" value="Genomic_DNA"/>
</dbReference>
<dbReference type="RefSeq" id="WP_013933291.1">
    <property type="nucleotide sequence ID" value="NC_015708.1"/>
</dbReference>
<dbReference type="RefSeq" id="YP_004661180.1">
    <property type="nucleotide sequence ID" value="NC_015708.1"/>
</dbReference>
<dbReference type="SMR" id="F8J3D9"/>
<dbReference type="KEGG" id="ag:CBK62739"/>
<dbReference type="BioCyc" id="MetaCyc:MONOMER-19800"/>
<dbReference type="BRENDA" id="6.2.1.60">
    <property type="organism ID" value="17126"/>
</dbReference>
<dbReference type="GO" id="GO:0016878">
    <property type="term" value="F:acid-thiol ligase activity"/>
    <property type="evidence" value="ECO:0007669"/>
    <property type="project" value="UniProtKB-ARBA"/>
</dbReference>
<dbReference type="GO" id="GO:0005524">
    <property type="term" value="F:ATP binding"/>
    <property type="evidence" value="ECO:0007669"/>
    <property type="project" value="UniProtKB-KW"/>
</dbReference>
<dbReference type="GO" id="GO:0017000">
    <property type="term" value="P:antibiotic biosynthetic process"/>
    <property type="evidence" value="ECO:0007669"/>
    <property type="project" value="UniProtKB-KW"/>
</dbReference>
<dbReference type="Gene3D" id="3.30.300.30">
    <property type="match status" value="1"/>
</dbReference>
<dbReference type="Gene3D" id="3.40.50.12780">
    <property type="entry name" value="N-terminal domain of ligase-like"/>
    <property type="match status" value="1"/>
</dbReference>
<dbReference type="InterPro" id="IPR025110">
    <property type="entry name" value="AMP-bd_C"/>
</dbReference>
<dbReference type="InterPro" id="IPR045851">
    <property type="entry name" value="AMP-bd_C_sf"/>
</dbReference>
<dbReference type="InterPro" id="IPR020845">
    <property type="entry name" value="AMP-binding_CS"/>
</dbReference>
<dbReference type="InterPro" id="IPR000873">
    <property type="entry name" value="AMP-dep_synth/lig_dom"/>
</dbReference>
<dbReference type="InterPro" id="IPR042099">
    <property type="entry name" value="ANL_N_sf"/>
</dbReference>
<dbReference type="InterPro" id="IPR050237">
    <property type="entry name" value="ATP-dep_AMP-bd_enzyme"/>
</dbReference>
<dbReference type="NCBIfam" id="NF005714">
    <property type="entry name" value="PRK07529.1"/>
    <property type="match status" value="1"/>
</dbReference>
<dbReference type="PANTHER" id="PTHR43767">
    <property type="entry name" value="LONG-CHAIN-FATTY-ACID--COA LIGASE"/>
    <property type="match status" value="1"/>
</dbReference>
<dbReference type="PANTHER" id="PTHR43767:SF1">
    <property type="entry name" value="NONRIBOSOMAL PEPTIDE SYNTHASE PES1 (EUROFUNG)-RELATED"/>
    <property type="match status" value="1"/>
</dbReference>
<dbReference type="Pfam" id="PF00501">
    <property type="entry name" value="AMP-binding"/>
    <property type="match status" value="1"/>
</dbReference>
<dbReference type="Pfam" id="PF13193">
    <property type="entry name" value="AMP-binding_C"/>
    <property type="match status" value="1"/>
</dbReference>
<dbReference type="SUPFAM" id="SSF56801">
    <property type="entry name" value="Acetyl-CoA synthetase-like"/>
    <property type="match status" value="1"/>
</dbReference>
<dbReference type="PROSITE" id="PS00455">
    <property type="entry name" value="AMP_BINDING"/>
    <property type="match status" value="1"/>
</dbReference>
<gene>
    <name evidence="3" type="primary">tmlU</name>
</gene>
<accession>F8J3D9</accession>
<proteinExistence type="evidence at protein level"/>
<comment type="function">
    <text evidence="2">Acyl-CoA ligase that catalyzes the CoA acylation of pseudomonate C, leading to the formation of pseudomonoyl-CoA C (PAC-CoA) (PubMed:25726835). Also shows high activity with pseudomonoyl-CoA A as substrate (PubMed:25726835). In addition, can activate acetic, octanoic, 2,4-dodecadienoic and 2,4-decadienoic acids, although with much lower activity (PubMed:25726835). In vivo, is probably involved in the biosynthesis of thiomarinol, a naturally occurring double-headed antibiotic (PubMed:25726835).</text>
</comment>
<comment type="catalytic activity">
    <reaction evidence="5">
        <text>ATP + a marinolic acid + CoA = AMP + diphosphate + a marinoloyl-CoA.</text>
        <dbReference type="EC" id="6.2.1.60"/>
    </reaction>
</comment>
<comment type="catalytic activity">
    <reaction evidence="2">
        <text>ATP + a pseudomonic acid + CoA = AMP + diphosphate + a pseudomonoyl-CoA.</text>
        <dbReference type="EC" id="6.2.1.60"/>
    </reaction>
</comment>
<comment type="catalytic activity">
    <reaction evidence="5">
        <text>marinolate C + ATP + CoA = marinoloyl-CoA C + AMP + diphosphate</text>
        <dbReference type="Rhea" id="RHEA:59148"/>
        <dbReference type="ChEBI" id="CHEBI:30616"/>
        <dbReference type="ChEBI" id="CHEBI:33019"/>
        <dbReference type="ChEBI" id="CHEBI:57287"/>
        <dbReference type="ChEBI" id="CHEBI:142975"/>
        <dbReference type="ChEBI" id="CHEBI:142976"/>
        <dbReference type="ChEBI" id="CHEBI:456215"/>
        <dbReference type="EC" id="6.2.1.60"/>
    </reaction>
    <physiologicalReaction direction="left-to-right" evidence="5">
        <dbReference type="Rhea" id="RHEA:59149"/>
    </physiologicalReaction>
</comment>
<comment type="catalytic activity">
    <reaction evidence="2">
        <text>pseudomonate C + ATP + CoA = pseudomonoyl-CoA C + AMP + diphosphate</text>
        <dbReference type="Rhea" id="RHEA:59152"/>
        <dbReference type="ChEBI" id="CHEBI:30616"/>
        <dbReference type="ChEBI" id="CHEBI:33019"/>
        <dbReference type="ChEBI" id="CHEBI:57287"/>
        <dbReference type="ChEBI" id="CHEBI:142974"/>
        <dbReference type="ChEBI" id="CHEBI:142977"/>
        <dbReference type="ChEBI" id="CHEBI:456215"/>
        <dbReference type="EC" id="6.2.1.60"/>
    </reaction>
</comment>
<comment type="biophysicochemical properties">
    <kinetics>
        <KM evidence="2">6 uM for pseudomonic acid C</KM>
        <KM evidence="2">5.2 uM for pseudomonic acid A</KM>
        <KM evidence="2">0.5 mM for octanoic acid</KM>
        <text evidence="2">kcat is 3.2 sec(-1) with pseudomonic acid C as substrate. kcat is 3.0 sec(-1) with pseudomonic acid A as substrate. kcat is 0.005 sec(-1) with octanoic acid as substrate.</text>
    </kinetics>
</comment>
<comment type="pathway">
    <text evidence="2">Antibiotic biosynthesis.</text>
</comment>
<comment type="disruption phenotype">
    <text evidence="1">The deletion mutant can produce both marinolic acid and acyl pyrrothines, but not thiomarinol.</text>
</comment>
<comment type="similarity">
    <text evidence="4">Belongs to the ATP-dependent AMP-binding enzyme family.</text>
</comment>
<reference key="1">
    <citation type="journal article" date="2011" name="PLoS ONE">
        <title>A natural plasmid uniquely encodes two biosynthetic pathways creating a potent anti-MRSA antibiotic.</title>
        <authorList>
            <person name="Fukuda D."/>
            <person name="Haines A.S."/>
            <person name="Song Z."/>
            <person name="Murphy A."/>
            <person name="Hothersall J."/>
            <person name="Stephens E."/>
            <person name="Gurney R."/>
            <person name="Cox R."/>
            <person name="Crosby J."/>
            <person name="Willis C."/>
            <person name="Simpson T.J."/>
            <person name="Thomas C.M."/>
        </authorList>
    </citation>
    <scope>NUCLEOTIDE SEQUENCE [LARGE SCALE GENOMIC DNA]</scope>
    <scope>DISRUPTION PHENOTYPE</scope>
    <source>
        <strain>SANK 73390</strain>
        <plasmid>pTML1</plasmid>
    </source>
</reference>
<reference key="2">
    <citation type="journal article" date="2015" name="Angew. Chem. Int. Ed.">
        <title>Enzymatic basis of 'hybridity' in thiomarinol biosynthesis.</title>
        <authorList>
            <person name="Dunn Z.D."/>
            <person name="Wever W.J."/>
            <person name="Economou N.J."/>
            <person name="Bowers A.A."/>
            <person name="Li B."/>
        </authorList>
    </citation>
    <scope>FUNCTION</scope>
    <scope>CATALYTIC ACTIVITY</scope>
    <scope>BIOPHYSICOCHEMICAL PROPERTIES</scope>
    <scope>PATHWAY</scope>
    <source>
        <strain>SANK 73390</strain>
    </source>
</reference>
<feature type="chain" id="PRO_0000458166" description="Marinolic acid--CoA ligase">
    <location>
        <begin position="1"/>
        <end position="654"/>
    </location>
</feature>
<protein>
    <recommendedName>
        <fullName evidence="4">Marinolic acid--CoA ligase</fullName>
        <ecNumber evidence="2">6.2.1.60</ecNumber>
    </recommendedName>
</protein>